<gene>
    <name evidence="1" type="primary">mscL</name>
    <name type="ordered locus">SAUSA300_1244</name>
</gene>
<dbReference type="EMBL" id="CP000255">
    <property type="protein sequence ID" value="ABD21377.1"/>
    <property type="status" value="ALT_INIT"/>
    <property type="molecule type" value="Genomic_DNA"/>
</dbReference>
<dbReference type="RefSeq" id="WP_000910489.1">
    <property type="nucleotide sequence ID" value="NZ_CP027476.1"/>
</dbReference>
<dbReference type="SMR" id="Q2FH87"/>
<dbReference type="KEGG" id="saa:SAUSA300_1244"/>
<dbReference type="HOGENOM" id="CLU_095787_0_0_9"/>
<dbReference type="Proteomes" id="UP000001939">
    <property type="component" value="Chromosome"/>
</dbReference>
<dbReference type="GO" id="GO:0005886">
    <property type="term" value="C:plasma membrane"/>
    <property type="evidence" value="ECO:0007669"/>
    <property type="project" value="UniProtKB-SubCell"/>
</dbReference>
<dbReference type="GO" id="GO:0008381">
    <property type="term" value="F:mechanosensitive monoatomic ion channel activity"/>
    <property type="evidence" value="ECO:0007669"/>
    <property type="project" value="UniProtKB-UniRule"/>
</dbReference>
<dbReference type="FunFam" id="1.10.1200.120:FF:000002">
    <property type="entry name" value="Large-conductance mechanosensitive channel"/>
    <property type="match status" value="1"/>
</dbReference>
<dbReference type="Gene3D" id="1.10.1200.120">
    <property type="entry name" value="Large-conductance mechanosensitive channel, MscL, domain 1"/>
    <property type="match status" value="1"/>
</dbReference>
<dbReference type="HAMAP" id="MF_00115">
    <property type="entry name" value="MscL"/>
    <property type="match status" value="1"/>
</dbReference>
<dbReference type="InterPro" id="IPR019823">
    <property type="entry name" value="Mechanosensitive_channel_CS"/>
</dbReference>
<dbReference type="InterPro" id="IPR001185">
    <property type="entry name" value="MS_channel"/>
</dbReference>
<dbReference type="InterPro" id="IPR037673">
    <property type="entry name" value="MSC/AndL"/>
</dbReference>
<dbReference type="InterPro" id="IPR036019">
    <property type="entry name" value="MscL_channel"/>
</dbReference>
<dbReference type="NCBIfam" id="TIGR00220">
    <property type="entry name" value="mscL"/>
    <property type="match status" value="1"/>
</dbReference>
<dbReference type="NCBIfam" id="NF010559">
    <property type="entry name" value="PRK13954.1"/>
    <property type="match status" value="1"/>
</dbReference>
<dbReference type="PANTHER" id="PTHR30266:SF2">
    <property type="entry name" value="LARGE-CONDUCTANCE MECHANOSENSITIVE CHANNEL"/>
    <property type="match status" value="1"/>
</dbReference>
<dbReference type="PANTHER" id="PTHR30266">
    <property type="entry name" value="MECHANOSENSITIVE CHANNEL MSCL"/>
    <property type="match status" value="1"/>
</dbReference>
<dbReference type="Pfam" id="PF01741">
    <property type="entry name" value="MscL"/>
    <property type="match status" value="1"/>
</dbReference>
<dbReference type="PRINTS" id="PR01264">
    <property type="entry name" value="MECHCHANNEL"/>
</dbReference>
<dbReference type="SUPFAM" id="SSF81330">
    <property type="entry name" value="Gated mechanosensitive channel"/>
    <property type="match status" value="1"/>
</dbReference>
<dbReference type="PROSITE" id="PS01327">
    <property type="entry name" value="MSCL"/>
    <property type="match status" value="1"/>
</dbReference>
<reference key="1">
    <citation type="journal article" date="2006" name="Lancet">
        <title>Complete genome sequence of USA300, an epidemic clone of community-acquired meticillin-resistant Staphylococcus aureus.</title>
        <authorList>
            <person name="Diep B.A."/>
            <person name="Gill S.R."/>
            <person name="Chang R.F."/>
            <person name="Phan T.H."/>
            <person name="Chen J.H."/>
            <person name="Davidson M.G."/>
            <person name="Lin F."/>
            <person name="Lin J."/>
            <person name="Carleton H.A."/>
            <person name="Mongodin E.F."/>
            <person name="Sensabaugh G.F."/>
            <person name="Perdreau-Remington F."/>
        </authorList>
    </citation>
    <scope>NUCLEOTIDE SEQUENCE [LARGE SCALE GENOMIC DNA]</scope>
    <source>
        <strain>USA300</strain>
    </source>
</reference>
<keyword id="KW-1003">Cell membrane</keyword>
<keyword id="KW-0407">Ion channel</keyword>
<keyword id="KW-0406">Ion transport</keyword>
<keyword id="KW-0472">Membrane</keyword>
<keyword id="KW-0812">Transmembrane</keyword>
<keyword id="KW-1133">Transmembrane helix</keyword>
<keyword id="KW-0813">Transport</keyword>
<evidence type="ECO:0000255" key="1">
    <source>
        <dbReference type="HAMAP-Rule" id="MF_00115"/>
    </source>
</evidence>
<evidence type="ECO:0000305" key="2"/>
<comment type="function">
    <text evidence="1">Channel that opens in response to stretch forces in the membrane lipid bilayer. May participate in the regulation of osmotic pressure changes within the cell.</text>
</comment>
<comment type="subunit">
    <text evidence="1">Homopentamer.</text>
</comment>
<comment type="subcellular location">
    <subcellularLocation>
        <location evidence="1">Cell membrane</location>
        <topology evidence="1">Multi-pass membrane protein</topology>
    </subcellularLocation>
</comment>
<comment type="similarity">
    <text evidence="1">Belongs to the MscL family.</text>
</comment>
<comment type="sequence caution" evidence="2">
    <conflict type="erroneous initiation">
        <sequence resource="EMBL-CDS" id="ABD21377"/>
    </conflict>
</comment>
<proteinExistence type="inferred from homology"/>
<protein>
    <recommendedName>
        <fullName evidence="1">Large-conductance mechanosensitive channel</fullName>
    </recommendedName>
</protein>
<sequence length="120" mass="13616">MLKEFKEFALKGNVLDLAIAVVMGAAFNKIISSLVENIIMPLIGKIFGSVDFAKEWSFWGIKYGLFIQSVIDFIIIAFALFIFVKIANTLMKKEEAEEEAVVEENVVLLTEIRDLLREKK</sequence>
<feature type="chain" id="PRO_0000238039" description="Large-conductance mechanosensitive channel">
    <location>
        <begin position="1"/>
        <end position="120"/>
    </location>
</feature>
<feature type="transmembrane region" description="Helical" evidence="1">
    <location>
        <begin position="7"/>
        <end position="27"/>
    </location>
</feature>
<feature type="transmembrane region" description="Helical" evidence="1">
    <location>
        <begin position="64"/>
        <end position="84"/>
    </location>
</feature>
<accession>Q2FH87</accession>
<name>MSCL_STAA3</name>
<organism>
    <name type="scientific">Staphylococcus aureus (strain USA300)</name>
    <dbReference type="NCBI Taxonomy" id="367830"/>
    <lineage>
        <taxon>Bacteria</taxon>
        <taxon>Bacillati</taxon>
        <taxon>Bacillota</taxon>
        <taxon>Bacilli</taxon>
        <taxon>Bacillales</taxon>
        <taxon>Staphylococcaceae</taxon>
        <taxon>Staphylococcus</taxon>
    </lineage>
</organism>